<sequence>MLDPNLLRNEPDAVAEKLARRGFKLDVDKLRALEERRKVLQVNTENLQAERNSRSKSIGQAKARGEDIEPLRLEVNKLGEELDAAKAELDTLLAEIRDIALTIPNLPADEVPVGKDENDNVEVSRWGTPREFDFEIRDHVTLGEMHSGLDFAAAVKLTGSRFVVMKGQIARMHRALSQFMLDLHTEQHGYSENYVPYLVNHDTLYGTGQLPKFAGDLFHTRPLEEEADSSNYALIPTAEVPLTNLVRDEIIDEDQLPIKMTAHTPCFRSEAGSYGRDTRGLIRMHQFDKVEMVQIVRPEDSMAALEEMTGHAEKVLQLLGLPYRKIILCTGDMGFGACKTYDLEVWVPAQNTYREISSCSNVWDFQARRMQARCRSKSDKKTRLVHTLNGSGLAVGRTLVAVMENYQQADGRIEVPEVLRPYMNGLEYIG</sequence>
<accession>Q5PGI6</accession>
<gene>
    <name evidence="1" type="primary">serS</name>
    <name type="ordered locus">SPA1835</name>
</gene>
<keyword id="KW-0030">Aminoacyl-tRNA synthetase</keyword>
<keyword id="KW-0067">ATP-binding</keyword>
<keyword id="KW-0963">Cytoplasm</keyword>
<keyword id="KW-0436">Ligase</keyword>
<keyword id="KW-0547">Nucleotide-binding</keyword>
<keyword id="KW-0648">Protein biosynthesis</keyword>
<dbReference type="EC" id="6.1.1.11" evidence="1"/>
<dbReference type="EMBL" id="CP000026">
    <property type="protein sequence ID" value="AAV77748.1"/>
    <property type="molecule type" value="Genomic_DNA"/>
</dbReference>
<dbReference type="RefSeq" id="WP_000886697.1">
    <property type="nucleotide sequence ID" value="NC_006511.1"/>
</dbReference>
<dbReference type="SMR" id="Q5PGI6"/>
<dbReference type="KEGG" id="spt:SPA1835"/>
<dbReference type="HOGENOM" id="CLU_023797_1_1_6"/>
<dbReference type="UniPathway" id="UPA00906">
    <property type="reaction ID" value="UER00895"/>
</dbReference>
<dbReference type="Proteomes" id="UP000008185">
    <property type="component" value="Chromosome"/>
</dbReference>
<dbReference type="GO" id="GO:0005737">
    <property type="term" value="C:cytoplasm"/>
    <property type="evidence" value="ECO:0007669"/>
    <property type="project" value="UniProtKB-SubCell"/>
</dbReference>
<dbReference type="GO" id="GO:0005524">
    <property type="term" value="F:ATP binding"/>
    <property type="evidence" value="ECO:0007669"/>
    <property type="project" value="UniProtKB-UniRule"/>
</dbReference>
<dbReference type="GO" id="GO:0004828">
    <property type="term" value="F:serine-tRNA ligase activity"/>
    <property type="evidence" value="ECO:0007669"/>
    <property type="project" value="UniProtKB-UniRule"/>
</dbReference>
<dbReference type="GO" id="GO:0016260">
    <property type="term" value="P:selenocysteine biosynthetic process"/>
    <property type="evidence" value="ECO:0007669"/>
    <property type="project" value="UniProtKB-UniRule"/>
</dbReference>
<dbReference type="GO" id="GO:0006434">
    <property type="term" value="P:seryl-tRNA aminoacylation"/>
    <property type="evidence" value="ECO:0007669"/>
    <property type="project" value="UniProtKB-UniRule"/>
</dbReference>
<dbReference type="CDD" id="cd00770">
    <property type="entry name" value="SerRS_core"/>
    <property type="match status" value="1"/>
</dbReference>
<dbReference type="FunFam" id="1.10.287.40:FF:000001">
    <property type="entry name" value="Serine--tRNA ligase"/>
    <property type="match status" value="1"/>
</dbReference>
<dbReference type="FunFam" id="3.30.930.10:FF:000018">
    <property type="entry name" value="Serine--tRNA ligase"/>
    <property type="match status" value="1"/>
</dbReference>
<dbReference type="Gene3D" id="3.30.930.10">
    <property type="entry name" value="Bira Bifunctional Protein, Domain 2"/>
    <property type="match status" value="1"/>
</dbReference>
<dbReference type="Gene3D" id="1.10.287.40">
    <property type="entry name" value="Serine-tRNA synthetase, tRNA binding domain"/>
    <property type="match status" value="1"/>
</dbReference>
<dbReference type="HAMAP" id="MF_00176">
    <property type="entry name" value="Ser_tRNA_synth_type1"/>
    <property type="match status" value="1"/>
</dbReference>
<dbReference type="InterPro" id="IPR002314">
    <property type="entry name" value="aa-tRNA-synt_IIb"/>
</dbReference>
<dbReference type="InterPro" id="IPR006195">
    <property type="entry name" value="aa-tRNA-synth_II"/>
</dbReference>
<dbReference type="InterPro" id="IPR045864">
    <property type="entry name" value="aa-tRNA-synth_II/BPL/LPL"/>
</dbReference>
<dbReference type="InterPro" id="IPR002317">
    <property type="entry name" value="Ser-tRNA-ligase_type_1"/>
</dbReference>
<dbReference type="InterPro" id="IPR015866">
    <property type="entry name" value="Ser-tRNA-synth_1_N"/>
</dbReference>
<dbReference type="InterPro" id="IPR042103">
    <property type="entry name" value="SerRS_1_N_sf"/>
</dbReference>
<dbReference type="InterPro" id="IPR033729">
    <property type="entry name" value="SerRS_core"/>
</dbReference>
<dbReference type="InterPro" id="IPR010978">
    <property type="entry name" value="tRNA-bd_arm"/>
</dbReference>
<dbReference type="NCBIfam" id="TIGR00414">
    <property type="entry name" value="serS"/>
    <property type="match status" value="1"/>
</dbReference>
<dbReference type="PANTHER" id="PTHR43697:SF1">
    <property type="entry name" value="SERINE--TRNA LIGASE"/>
    <property type="match status" value="1"/>
</dbReference>
<dbReference type="PANTHER" id="PTHR43697">
    <property type="entry name" value="SERYL-TRNA SYNTHETASE"/>
    <property type="match status" value="1"/>
</dbReference>
<dbReference type="Pfam" id="PF02403">
    <property type="entry name" value="Seryl_tRNA_N"/>
    <property type="match status" value="1"/>
</dbReference>
<dbReference type="Pfam" id="PF00587">
    <property type="entry name" value="tRNA-synt_2b"/>
    <property type="match status" value="1"/>
</dbReference>
<dbReference type="PIRSF" id="PIRSF001529">
    <property type="entry name" value="Ser-tRNA-synth_IIa"/>
    <property type="match status" value="1"/>
</dbReference>
<dbReference type="PRINTS" id="PR00981">
    <property type="entry name" value="TRNASYNTHSER"/>
</dbReference>
<dbReference type="SUPFAM" id="SSF55681">
    <property type="entry name" value="Class II aaRS and biotin synthetases"/>
    <property type="match status" value="1"/>
</dbReference>
<dbReference type="SUPFAM" id="SSF46589">
    <property type="entry name" value="tRNA-binding arm"/>
    <property type="match status" value="1"/>
</dbReference>
<dbReference type="PROSITE" id="PS50862">
    <property type="entry name" value="AA_TRNA_LIGASE_II"/>
    <property type="match status" value="1"/>
</dbReference>
<organism>
    <name type="scientific">Salmonella paratyphi A (strain ATCC 9150 / SARB42)</name>
    <dbReference type="NCBI Taxonomy" id="295319"/>
    <lineage>
        <taxon>Bacteria</taxon>
        <taxon>Pseudomonadati</taxon>
        <taxon>Pseudomonadota</taxon>
        <taxon>Gammaproteobacteria</taxon>
        <taxon>Enterobacterales</taxon>
        <taxon>Enterobacteriaceae</taxon>
        <taxon>Salmonella</taxon>
    </lineage>
</organism>
<evidence type="ECO:0000255" key="1">
    <source>
        <dbReference type="HAMAP-Rule" id="MF_00176"/>
    </source>
</evidence>
<proteinExistence type="inferred from homology"/>
<comment type="function">
    <text evidence="1">Catalyzes the attachment of serine to tRNA(Ser). Is also able to aminoacylate tRNA(Sec) with serine, to form the misacylated tRNA L-seryl-tRNA(Sec), which will be further converted into selenocysteinyl-tRNA(Sec).</text>
</comment>
<comment type="catalytic activity">
    <reaction evidence="1">
        <text>tRNA(Ser) + L-serine + ATP = L-seryl-tRNA(Ser) + AMP + diphosphate + H(+)</text>
        <dbReference type="Rhea" id="RHEA:12292"/>
        <dbReference type="Rhea" id="RHEA-COMP:9669"/>
        <dbReference type="Rhea" id="RHEA-COMP:9703"/>
        <dbReference type="ChEBI" id="CHEBI:15378"/>
        <dbReference type="ChEBI" id="CHEBI:30616"/>
        <dbReference type="ChEBI" id="CHEBI:33019"/>
        <dbReference type="ChEBI" id="CHEBI:33384"/>
        <dbReference type="ChEBI" id="CHEBI:78442"/>
        <dbReference type="ChEBI" id="CHEBI:78533"/>
        <dbReference type="ChEBI" id="CHEBI:456215"/>
        <dbReference type="EC" id="6.1.1.11"/>
    </reaction>
</comment>
<comment type="catalytic activity">
    <reaction evidence="1">
        <text>tRNA(Sec) + L-serine + ATP = L-seryl-tRNA(Sec) + AMP + diphosphate + H(+)</text>
        <dbReference type="Rhea" id="RHEA:42580"/>
        <dbReference type="Rhea" id="RHEA-COMP:9742"/>
        <dbReference type="Rhea" id="RHEA-COMP:10128"/>
        <dbReference type="ChEBI" id="CHEBI:15378"/>
        <dbReference type="ChEBI" id="CHEBI:30616"/>
        <dbReference type="ChEBI" id="CHEBI:33019"/>
        <dbReference type="ChEBI" id="CHEBI:33384"/>
        <dbReference type="ChEBI" id="CHEBI:78442"/>
        <dbReference type="ChEBI" id="CHEBI:78533"/>
        <dbReference type="ChEBI" id="CHEBI:456215"/>
        <dbReference type="EC" id="6.1.1.11"/>
    </reaction>
</comment>
<comment type="pathway">
    <text evidence="1">Aminoacyl-tRNA biosynthesis; selenocysteinyl-tRNA(Sec) biosynthesis; L-seryl-tRNA(Sec) from L-serine and tRNA(Sec): step 1/1.</text>
</comment>
<comment type="subunit">
    <text evidence="1">Homodimer. The tRNA molecule binds across the dimer.</text>
</comment>
<comment type="subcellular location">
    <subcellularLocation>
        <location evidence="1">Cytoplasm</location>
    </subcellularLocation>
</comment>
<comment type="domain">
    <text evidence="1">Consists of two distinct domains, a catalytic core and a N-terminal extension that is involved in tRNA binding.</text>
</comment>
<comment type="similarity">
    <text evidence="1">Belongs to the class-II aminoacyl-tRNA synthetase family. Type-1 seryl-tRNA synthetase subfamily.</text>
</comment>
<reference key="1">
    <citation type="journal article" date="2004" name="Nat. Genet.">
        <title>Comparison of genome degradation in Paratyphi A and Typhi, human-restricted serovars of Salmonella enterica that cause typhoid.</title>
        <authorList>
            <person name="McClelland M."/>
            <person name="Sanderson K.E."/>
            <person name="Clifton S.W."/>
            <person name="Latreille P."/>
            <person name="Porwollik S."/>
            <person name="Sabo A."/>
            <person name="Meyer R."/>
            <person name="Bieri T."/>
            <person name="Ozersky P."/>
            <person name="McLellan M."/>
            <person name="Harkins C.R."/>
            <person name="Wang C."/>
            <person name="Nguyen C."/>
            <person name="Berghoff A."/>
            <person name="Elliott G."/>
            <person name="Kohlberg S."/>
            <person name="Strong C."/>
            <person name="Du F."/>
            <person name="Carter J."/>
            <person name="Kremizki C."/>
            <person name="Layman D."/>
            <person name="Leonard S."/>
            <person name="Sun H."/>
            <person name="Fulton L."/>
            <person name="Nash W."/>
            <person name="Miner T."/>
            <person name="Minx P."/>
            <person name="Delehaunty K."/>
            <person name="Fronick C."/>
            <person name="Magrini V."/>
            <person name="Nhan M."/>
            <person name="Warren W."/>
            <person name="Florea L."/>
            <person name="Spieth J."/>
            <person name="Wilson R.K."/>
        </authorList>
    </citation>
    <scope>NUCLEOTIDE SEQUENCE [LARGE SCALE GENOMIC DNA]</scope>
    <source>
        <strain>ATCC 9150 / SARB42</strain>
    </source>
</reference>
<feature type="chain" id="PRO_0000122112" description="Serine--tRNA ligase">
    <location>
        <begin position="1"/>
        <end position="430"/>
    </location>
</feature>
<feature type="binding site" evidence="1">
    <location>
        <begin position="237"/>
        <end position="239"/>
    </location>
    <ligand>
        <name>L-serine</name>
        <dbReference type="ChEBI" id="CHEBI:33384"/>
    </ligand>
</feature>
<feature type="binding site" evidence="1">
    <location>
        <begin position="268"/>
        <end position="270"/>
    </location>
    <ligand>
        <name>ATP</name>
        <dbReference type="ChEBI" id="CHEBI:30616"/>
    </ligand>
</feature>
<feature type="binding site" evidence="1">
    <location>
        <position position="291"/>
    </location>
    <ligand>
        <name>L-serine</name>
        <dbReference type="ChEBI" id="CHEBI:33384"/>
    </ligand>
</feature>
<feature type="binding site" evidence="1">
    <location>
        <begin position="355"/>
        <end position="358"/>
    </location>
    <ligand>
        <name>ATP</name>
        <dbReference type="ChEBI" id="CHEBI:30616"/>
    </ligand>
</feature>
<feature type="binding site" evidence="1">
    <location>
        <position position="391"/>
    </location>
    <ligand>
        <name>L-serine</name>
        <dbReference type="ChEBI" id="CHEBI:33384"/>
    </ligand>
</feature>
<protein>
    <recommendedName>
        <fullName evidence="1">Serine--tRNA ligase</fullName>
        <ecNumber evidence="1">6.1.1.11</ecNumber>
    </recommendedName>
    <alternativeName>
        <fullName evidence="1">Seryl-tRNA synthetase</fullName>
        <shortName evidence="1">SerRS</shortName>
    </alternativeName>
    <alternativeName>
        <fullName evidence="1">Seryl-tRNA(Ser/Sec) synthetase</fullName>
    </alternativeName>
</protein>
<name>SYS_SALPA</name>